<comment type="catalytic activity">
    <reaction evidence="1">
        <text>(2R)-3-phosphoglycerate + ATP = (2R)-3-phospho-glyceroyl phosphate + ADP</text>
        <dbReference type="Rhea" id="RHEA:14801"/>
        <dbReference type="ChEBI" id="CHEBI:30616"/>
        <dbReference type="ChEBI" id="CHEBI:57604"/>
        <dbReference type="ChEBI" id="CHEBI:58272"/>
        <dbReference type="ChEBI" id="CHEBI:456216"/>
        <dbReference type="EC" id="2.7.2.3"/>
    </reaction>
</comment>
<comment type="pathway">
    <text evidence="1">Carbohydrate degradation; glycolysis; pyruvate from D-glyceraldehyde 3-phosphate: step 2/5.</text>
</comment>
<comment type="subunit">
    <text evidence="1">Monomer.</text>
</comment>
<comment type="subcellular location">
    <subcellularLocation>
        <location evidence="1">Cytoplasm</location>
    </subcellularLocation>
</comment>
<comment type="similarity">
    <text evidence="1">Belongs to the phosphoglycerate kinase family.</text>
</comment>
<feature type="chain" id="PRO_1000096341" description="Phosphoglycerate kinase">
    <location>
        <begin position="1"/>
        <end position="387"/>
    </location>
</feature>
<feature type="binding site" evidence="1">
    <location>
        <begin position="21"/>
        <end position="23"/>
    </location>
    <ligand>
        <name>substrate</name>
    </ligand>
</feature>
<feature type="binding site" evidence="1">
    <location>
        <position position="36"/>
    </location>
    <ligand>
        <name>substrate</name>
    </ligand>
</feature>
<feature type="binding site" evidence="1">
    <location>
        <begin position="59"/>
        <end position="62"/>
    </location>
    <ligand>
        <name>substrate</name>
    </ligand>
</feature>
<feature type="binding site" evidence="1">
    <location>
        <position position="114"/>
    </location>
    <ligand>
        <name>substrate</name>
    </ligand>
</feature>
<feature type="binding site" evidence="1">
    <location>
        <position position="147"/>
    </location>
    <ligand>
        <name>substrate</name>
    </ligand>
</feature>
<feature type="binding site" evidence="1">
    <location>
        <position position="198"/>
    </location>
    <ligand>
        <name>ATP</name>
        <dbReference type="ChEBI" id="CHEBI:30616"/>
    </ligand>
</feature>
<feature type="binding site" evidence="1">
    <location>
        <position position="314"/>
    </location>
    <ligand>
        <name>ATP</name>
        <dbReference type="ChEBI" id="CHEBI:30616"/>
    </ligand>
</feature>
<feature type="binding site" evidence="1">
    <location>
        <begin position="340"/>
        <end position="343"/>
    </location>
    <ligand>
        <name>ATP</name>
        <dbReference type="ChEBI" id="CHEBI:30616"/>
    </ligand>
</feature>
<accession>B2VF23</accession>
<organism>
    <name type="scientific">Erwinia tasmaniensis (strain DSM 17950 / CFBP 7177 / CIP 109463 / NCPPB 4357 / Et1/99)</name>
    <dbReference type="NCBI Taxonomy" id="465817"/>
    <lineage>
        <taxon>Bacteria</taxon>
        <taxon>Pseudomonadati</taxon>
        <taxon>Pseudomonadota</taxon>
        <taxon>Gammaproteobacteria</taxon>
        <taxon>Enterobacterales</taxon>
        <taxon>Erwiniaceae</taxon>
        <taxon>Erwinia</taxon>
    </lineage>
</organism>
<proteinExistence type="inferred from homology"/>
<keyword id="KW-0067">ATP-binding</keyword>
<keyword id="KW-0963">Cytoplasm</keyword>
<keyword id="KW-0324">Glycolysis</keyword>
<keyword id="KW-0418">Kinase</keyword>
<keyword id="KW-0547">Nucleotide-binding</keyword>
<keyword id="KW-1185">Reference proteome</keyword>
<keyword id="KW-0808">Transferase</keyword>
<protein>
    <recommendedName>
        <fullName evidence="1">Phosphoglycerate kinase</fullName>
        <ecNumber evidence="1">2.7.2.3</ecNumber>
    </recommendedName>
</protein>
<reference key="1">
    <citation type="journal article" date="2008" name="Environ. Microbiol.">
        <title>The genome of Erwinia tasmaniensis strain Et1/99, a non-pathogenic bacterium in the genus Erwinia.</title>
        <authorList>
            <person name="Kube M."/>
            <person name="Migdoll A.M."/>
            <person name="Mueller I."/>
            <person name="Kuhl H."/>
            <person name="Beck A."/>
            <person name="Reinhardt R."/>
            <person name="Geider K."/>
        </authorList>
    </citation>
    <scope>NUCLEOTIDE SEQUENCE [LARGE SCALE GENOMIC DNA]</scope>
    <source>
        <strain>DSM 17950 / CFBP 7177 / CIP 109463 / NCPPB 4357 / Et1/99</strain>
    </source>
</reference>
<gene>
    <name evidence="1" type="primary">pgk</name>
    <name type="ordered locus">ETA_28140</name>
</gene>
<evidence type="ECO:0000255" key="1">
    <source>
        <dbReference type="HAMAP-Rule" id="MF_00145"/>
    </source>
</evidence>
<dbReference type="EC" id="2.7.2.3" evidence="1"/>
<dbReference type="EMBL" id="CU468135">
    <property type="protein sequence ID" value="CAO97860.1"/>
    <property type="molecule type" value="Genomic_DNA"/>
</dbReference>
<dbReference type="RefSeq" id="WP_012442517.1">
    <property type="nucleotide sequence ID" value="NC_010694.1"/>
</dbReference>
<dbReference type="SMR" id="B2VF23"/>
<dbReference type="STRING" id="465817.ETA_28140"/>
<dbReference type="KEGG" id="eta:ETA_28140"/>
<dbReference type="eggNOG" id="COG0126">
    <property type="taxonomic scope" value="Bacteria"/>
</dbReference>
<dbReference type="HOGENOM" id="CLU_025427_0_2_6"/>
<dbReference type="OrthoDB" id="9808460at2"/>
<dbReference type="UniPathway" id="UPA00109">
    <property type="reaction ID" value="UER00185"/>
</dbReference>
<dbReference type="Proteomes" id="UP000001726">
    <property type="component" value="Chromosome"/>
</dbReference>
<dbReference type="GO" id="GO:0005829">
    <property type="term" value="C:cytosol"/>
    <property type="evidence" value="ECO:0007669"/>
    <property type="project" value="TreeGrafter"/>
</dbReference>
<dbReference type="GO" id="GO:0043531">
    <property type="term" value="F:ADP binding"/>
    <property type="evidence" value="ECO:0007669"/>
    <property type="project" value="TreeGrafter"/>
</dbReference>
<dbReference type="GO" id="GO:0005524">
    <property type="term" value="F:ATP binding"/>
    <property type="evidence" value="ECO:0007669"/>
    <property type="project" value="UniProtKB-KW"/>
</dbReference>
<dbReference type="GO" id="GO:0004618">
    <property type="term" value="F:phosphoglycerate kinase activity"/>
    <property type="evidence" value="ECO:0007669"/>
    <property type="project" value="UniProtKB-UniRule"/>
</dbReference>
<dbReference type="GO" id="GO:0006094">
    <property type="term" value="P:gluconeogenesis"/>
    <property type="evidence" value="ECO:0007669"/>
    <property type="project" value="TreeGrafter"/>
</dbReference>
<dbReference type="GO" id="GO:0006096">
    <property type="term" value="P:glycolytic process"/>
    <property type="evidence" value="ECO:0007669"/>
    <property type="project" value="UniProtKB-UniRule"/>
</dbReference>
<dbReference type="FunFam" id="3.40.50.1260:FF:000001">
    <property type="entry name" value="Phosphoglycerate kinase"/>
    <property type="match status" value="1"/>
</dbReference>
<dbReference type="FunFam" id="3.40.50.1260:FF:000002">
    <property type="entry name" value="Phosphoglycerate kinase"/>
    <property type="match status" value="1"/>
</dbReference>
<dbReference type="Gene3D" id="3.40.50.1260">
    <property type="entry name" value="Phosphoglycerate kinase, N-terminal domain"/>
    <property type="match status" value="2"/>
</dbReference>
<dbReference type="HAMAP" id="MF_00145">
    <property type="entry name" value="Phosphoglyc_kinase"/>
    <property type="match status" value="1"/>
</dbReference>
<dbReference type="InterPro" id="IPR001576">
    <property type="entry name" value="Phosphoglycerate_kinase"/>
</dbReference>
<dbReference type="InterPro" id="IPR015911">
    <property type="entry name" value="Phosphoglycerate_kinase_CS"/>
</dbReference>
<dbReference type="InterPro" id="IPR015824">
    <property type="entry name" value="Phosphoglycerate_kinase_N"/>
</dbReference>
<dbReference type="InterPro" id="IPR036043">
    <property type="entry name" value="Phosphoglycerate_kinase_sf"/>
</dbReference>
<dbReference type="PANTHER" id="PTHR11406">
    <property type="entry name" value="PHOSPHOGLYCERATE KINASE"/>
    <property type="match status" value="1"/>
</dbReference>
<dbReference type="PANTHER" id="PTHR11406:SF23">
    <property type="entry name" value="PHOSPHOGLYCERATE KINASE 1, CHLOROPLASTIC-RELATED"/>
    <property type="match status" value="1"/>
</dbReference>
<dbReference type="Pfam" id="PF00162">
    <property type="entry name" value="PGK"/>
    <property type="match status" value="1"/>
</dbReference>
<dbReference type="PIRSF" id="PIRSF000724">
    <property type="entry name" value="Pgk"/>
    <property type="match status" value="1"/>
</dbReference>
<dbReference type="PRINTS" id="PR00477">
    <property type="entry name" value="PHGLYCKINASE"/>
</dbReference>
<dbReference type="SUPFAM" id="SSF53748">
    <property type="entry name" value="Phosphoglycerate kinase"/>
    <property type="match status" value="1"/>
</dbReference>
<dbReference type="PROSITE" id="PS00111">
    <property type="entry name" value="PGLYCERATE_KINASE"/>
    <property type="match status" value="1"/>
</dbReference>
<name>PGK_ERWT9</name>
<sequence length="387" mass="41158">MSVIKMTDLDLAGKRVLIRADLNVPVKEGKVTSDARIRASLPTIEAALKQGAKVMVTSHLGRPTEGEYNEEFSLLPVVNYLKEKLGAENVSLAKDYLDGVELAAGKLVVLENVRFNKGEKKDDETLSKKYAALCDIFVMDAFGTAHRAQASTHGVGKFAPVACAGPLLSAELEALGKALKSPARPMVAVVGGSKVSTKFDVLNSLVKIADTVIVGGGIANTFVAIENNVGKSLYEPDFVDAAKKLRDEYGIPVPVDSRVGTEFSETAPSTVKKVSEVQDNEEIMDFGDETALAMANLLKDAKTILWNGPVGVFEFPNFRKGTEIVANAIADSDAFSIAGGGDTLAAIDLFGIEDKISYISTGGGAFLEFVEGKVLPAVAMLEERAKQ</sequence>